<organism>
    <name type="scientific">Rhodopseudomonas palustris (strain HaA2)</name>
    <dbReference type="NCBI Taxonomy" id="316058"/>
    <lineage>
        <taxon>Bacteria</taxon>
        <taxon>Pseudomonadati</taxon>
        <taxon>Pseudomonadota</taxon>
        <taxon>Alphaproteobacteria</taxon>
        <taxon>Hyphomicrobiales</taxon>
        <taxon>Nitrobacteraceae</taxon>
        <taxon>Rhodopseudomonas</taxon>
    </lineage>
</organism>
<accession>Q2IW82</accession>
<evidence type="ECO:0000255" key="1">
    <source>
        <dbReference type="HAMAP-Rule" id="MF_01220"/>
    </source>
</evidence>
<protein>
    <recommendedName>
        <fullName evidence="1">Uridylate kinase</fullName>
        <shortName evidence="1">UK</shortName>
        <ecNumber evidence="1">2.7.4.22</ecNumber>
    </recommendedName>
    <alternativeName>
        <fullName evidence="1">Uridine monophosphate kinase</fullName>
        <shortName evidence="1">UMP kinase</shortName>
        <shortName evidence="1">UMPK</shortName>
    </alternativeName>
</protein>
<name>PYRH_RHOP2</name>
<feature type="chain" id="PRO_0000323942" description="Uridylate kinase">
    <location>
        <begin position="1"/>
        <end position="238"/>
    </location>
</feature>
<feature type="binding site" evidence="1">
    <location>
        <begin position="12"/>
        <end position="15"/>
    </location>
    <ligand>
        <name>ATP</name>
        <dbReference type="ChEBI" id="CHEBI:30616"/>
    </ligand>
</feature>
<feature type="binding site" evidence="1">
    <location>
        <position position="54"/>
    </location>
    <ligand>
        <name>UMP</name>
        <dbReference type="ChEBI" id="CHEBI:57865"/>
    </ligand>
</feature>
<feature type="binding site" evidence="1">
    <location>
        <position position="55"/>
    </location>
    <ligand>
        <name>ATP</name>
        <dbReference type="ChEBI" id="CHEBI:30616"/>
    </ligand>
</feature>
<feature type="binding site" evidence="1">
    <location>
        <position position="59"/>
    </location>
    <ligand>
        <name>ATP</name>
        <dbReference type="ChEBI" id="CHEBI:30616"/>
    </ligand>
</feature>
<feature type="binding site" evidence="1">
    <location>
        <position position="74"/>
    </location>
    <ligand>
        <name>UMP</name>
        <dbReference type="ChEBI" id="CHEBI:57865"/>
    </ligand>
</feature>
<feature type="binding site" evidence="1">
    <location>
        <begin position="135"/>
        <end position="142"/>
    </location>
    <ligand>
        <name>UMP</name>
        <dbReference type="ChEBI" id="CHEBI:57865"/>
    </ligand>
</feature>
<feature type="binding site" evidence="1">
    <location>
        <position position="162"/>
    </location>
    <ligand>
        <name>ATP</name>
        <dbReference type="ChEBI" id="CHEBI:30616"/>
    </ligand>
</feature>
<feature type="binding site" evidence="1">
    <location>
        <position position="163"/>
    </location>
    <ligand>
        <name>ATP</name>
        <dbReference type="ChEBI" id="CHEBI:30616"/>
    </ligand>
</feature>
<feature type="binding site" evidence="1">
    <location>
        <position position="168"/>
    </location>
    <ligand>
        <name>ATP</name>
        <dbReference type="ChEBI" id="CHEBI:30616"/>
    </ligand>
</feature>
<feature type="binding site" evidence="1">
    <location>
        <position position="171"/>
    </location>
    <ligand>
        <name>ATP</name>
        <dbReference type="ChEBI" id="CHEBI:30616"/>
    </ligand>
</feature>
<reference key="1">
    <citation type="submission" date="2006-01" db="EMBL/GenBank/DDBJ databases">
        <title>Complete sequence of Rhodopseudomonas palustris HaA2.</title>
        <authorList>
            <consortium name="US DOE Joint Genome Institute"/>
            <person name="Copeland A."/>
            <person name="Lucas S."/>
            <person name="Lapidus A."/>
            <person name="Barry K."/>
            <person name="Detter J.C."/>
            <person name="Glavina T."/>
            <person name="Hammon N."/>
            <person name="Israni S."/>
            <person name="Pitluck S."/>
            <person name="Chain P."/>
            <person name="Malfatti S."/>
            <person name="Shin M."/>
            <person name="Vergez L."/>
            <person name="Schmutz J."/>
            <person name="Larimer F."/>
            <person name="Land M."/>
            <person name="Hauser L."/>
            <person name="Pelletier D.A."/>
            <person name="Kyrpides N."/>
            <person name="Anderson I."/>
            <person name="Oda Y."/>
            <person name="Harwood C.S."/>
            <person name="Richardson P."/>
        </authorList>
    </citation>
    <scope>NUCLEOTIDE SEQUENCE [LARGE SCALE GENOMIC DNA]</scope>
    <source>
        <strain>HaA2</strain>
    </source>
</reference>
<dbReference type="EC" id="2.7.4.22" evidence="1"/>
<dbReference type="EMBL" id="CP000250">
    <property type="protein sequence ID" value="ABD07528.1"/>
    <property type="molecule type" value="Genomic_DNA"/>
</dbReference>
<dbReference type="RefSeq" id="WP_011441713.1">
    <property type="nucleotide sequence ID" value="NC_007778.1"/>
</dbReference>
<dbReference type="SMR" id="Q2IW82"/>
<dbReference type="STRING" id="316058.RPB_2826"/>
<dbReference type="KEGG" id="rpb:RPB_2826"/>
<dbReference type="eggNOG" id="COG0528">
    <property type="taxonomic scope" value="Bacteria"/>
</dbReference>
<dbReference type="HOGENOM" id="CLU_033861_0_0_5"/>
<dbReference type="OrthoDB" id="9807458at2"/>
<dbReference type="UniPathway" id="UPA00159">
    <property type="reaction ID" value="UER00275"/>
</dbReference>
<dbReference type="Proteomes" id="UP000008809">
    <property type="component" value="Chromosome"/>
</dbReference>
<dbReference type="GO" id="GO:0005829">
    <property type="term" value="C:cytosol"/>
    <property type="evidence" value="ECO:0007669"/>
    <property type="project" value="TreeGrafter"/>
</dbReference>
<dbReference type="GO" id="GO:0005524">
    <property type="term" value="F:ATP binding"/>
    <property type="evidence" value="ECO:0007669"/>
    <property type="project" value="UniProtKB-KW"/>
</dbReference>
<dbReference type="GO" id="GO:0033862">
    <property type="term" value="F:UMP kinase activity"/>
    <property type="evidence" value="ECO:0007669"/>
    <property type="project" value="UniProtKB-EC"/>
</dbReference>
<dbReference type="GO" id="GO:0044210">
    <property type="term" value="P:'de novo' CTP biosynthetic process"/>
    <property type="evidence" value="ECO:0007669"/>
    <property type="project" value="UniProtKB-UniRule"/>
</dbReference>
<dbReference type="GO" id="GO:0006225">
    <property type="term" value="P:UDP biosynthetic process"/>
    <property type="evidence" value="ECO:0007669"/>
    <property type="project" value="TreeGrafter"/>
</dbReference>
<dbReference type="CDD" id="cd04254">
    <property type="entry name" value="AAK_UMPK-PyrH-Ec"/>
    <property type="match status" value="1"/>
</dbReference>
<dbReference type="FunFam" id="3.40.1160.10:FF:000001">
    <property type="entry name" value="Uridylate kinase"/>
    <property type="match status" value="1"/>
</dbReference>
<dbReference type="Gene3D" id="3.40.1160.10">
    <property type="entry name" value="Acetylglutamate kinase-like"/>
    <property type="match status" value="1"/>
</dbReference>
<dbReference type="HAMAP" id="MF_01220_B">
    <property type="entry name" value="PyrH_B"/>
    <property type="match status" value="1"/>
</dbReference>
<dbReference type="InterPro" id="IPR036393">
    <property type="entry name" value="AceGlu_kinase-like_sf"/>
</dbReference>
<dbReference type="InterPro" id="IPR001048">
    <property type="entry name" value="Asp/Glu/Uridylate_kinase"/>
</dbReference>
<dbReference type="InterPro" id="IPR011817">
    <property type="entry name" value="Uridylate_kinase"/>
</dbReference>
<dbReference type="InterPro" id="IPR015963">
    <property type="entry name" value="Uridylate_kinase_bac"/>
</dbReference>
<dbReference type="NCBIfam" id="TIGR02075">
    <property type="entry name" value="pyrH_bact"/>
    <property type="match status" value="1"/>
</dbReference>
<dbReference type="PANTHER" id="PTHR42833">
    <property type="entry name" value="URIDYLATE KINASE"/>
    <property type="match status" value="1"/>
</dbReference>
<dbReference type="PANTHER" id="PTHR42833:SF4">
    <property type="entry name" value="URIDYLATE KINASE PUMPKIN, CHLOROPLASTIC"/>
    <property type="match status" value="1"/>
</dbReference>
<dbReference type="Pfam" id="PF00696">
    <property type="entry name" value="AA_kinase"/>
    <property type="match status" value="1"/>
</dbReference>
<dbReference type="PIRSF" id="PIRSF005650">
    <property type="entry name" value="Uridylate_kin"/>
    <property type="match status" value="1"/>
</dbReference>
<dbReference type="SUPFAM" id="SSF53633">
    <property type="entry name" value="Carbamate kinase-like"/>
    <property type="match status" value="1"/>
</dbReference>
<comment type="function">
    <text evidence="1">Catalyzes the reversible phosphorylation of UMP to UDP.</text>
</comment>
<comment type="catalytic activity">
    <reaction evidence="1">
        <text>UMP + ATP = UDP + ADP</text>
        <dbReference type="Rhea" id="RHEA:24400"/>
        <dbReference type="ChEBI" id="CHEBI:30616"/>
        <dbReference type="ChEBI" id="CHEBI:57865"/>
        <dbReference type="ChEBI" id="CHEBI:58223"/>
        <dbReference type="ChEBI" id="CHEBI:456216"/>
        <dbReference type="EC" id="2.7.4.22"/>
    </reaction>
</comment>
<comment type="activity regulation">
    <text evidence="1">Inhibited by UTP.</text>
</comment>
<comment type="pathway">
    <text evidence="1">Pyrimidine metabolism; CTP biosynthesis via de novo pathway; UDP from UMP (UMPK route): step 1/1.</text>
</comment>
<comment type="subunit">
    <text evidence="1">Homohexamer.</text>
</comment>
<comment type="subcellular location">
    <subcellularLocation>
        <location evidence="1">Cytoplasm</location>
    </subcellularLocation>
</comment>
<comment type="similarity">
    <text evidence="1">Belongs to the UMP kinase family.</text>
</comment>
<gene>
    <name evidence="1" type="primary">pyrH</name>
    <name type="ordered locus">RPB_2826</name>
</gene>
<keyword id="KW-0067">ATP-binding</keyword>
<keyword id="KW-0963">Cytoplasm</keyword>
<keyword id="KW-0418">Kinase</keyword>
<keyword id="KW-0547">Nucleotide-binding</keyword>
<keyword id="KW-0665">Pyrimidine biosynthesis</keyword>
<keyword id="KW-1185">Reference proteome</keyword>
<keyword id="KW-0808">Transferase</keyword>
<proteinExistence type="inferred from homology"/>
<sequence length="238" mass="24616">MGEPIYRRVVVKLSGEYFAGPQHYGIDQPTIDRVAGDLIAARGLGVEIAVVVGGGNIFRGVEVSARGVSRPTGDTMGMLATVMNCLALGEALRRHGQPARTFSALLMPEVCDLYTRAAAQQTLAEGGIALLAGGTGNPFFTTDTTAVLRAAEIDAGAVLKATNVDGVYTADPKRDPNAKRFERLTHSEALAGGYKVMDATAFALARETSLPIIVFSIAEPGSIGAVLGGAGRATVVAG</sequence>